<name>RAD2_YEAST</name>
<feature type="chain" id="PRO_0000154035" description="DNA repair protein RAD2">
    <location>
        <begin position="1"/>
        <end position="1031"/>
    </location>
</feature>
<feature type="region of interest" description="N-domain">
    <location>
        <begin position="1"/>
        <end position="95"/>
    </location>
</feature>
<feature type="region of interest" description="Disordered" evidence="2">
    <location>
        <begin position="342"/>
        <end position="367"/>
    </location>
</feature>
<feature type="region of interest" description="Disordered" evidence="2">
    <location>
        <begin position="406"/>
        <end position="426"/>
    </location>
</feature>
<feature type="region of interest" description="Disordered" evidence="2">
    <location>
        <begin position="459"/>
        <end position="480"/>
    </location>
</feature>
<feature type="region of interest" description="Disordered" evidence="2">
    <location>
        <begin position="570"/>
        <end position="591"/>
    </location>
</feature>
<feature type="region of interest" description="Disordered" evidence="2">
    <location>
        <begin position="670"/>
        <end position="694"/>
    </location>
</feature>
<feature type="region of interest" description="I-domain">
    <location>
        <begin position="756"/>
        <end position="884"/>
    </location>
</feature>
<feature type="compositionally biased region" description="Basic and acidic residues" evidence="2">
    <location>
        <begin position="459"/>
        <end position="470"/>
    </location>
</feature>
<feature type="compositionally biased region" description="Basic and acidic residues" evidence="2">
    <location>
        <begin position="679"/>
        <end position="694"/>
    </location>
</feature>
<feature type="binding site" evidence="1">
    <location>
        <position position="30"/>
    </location>
    <ligand>
        <name>Mg(2+)</name>
        <dbReference type="ChEBI" id="CHEBI:18420"/>
        <label>1</label>
    </ligand>
</feature>
<feature type="binding site" evidence="1">
    <location>
        <position position="77"/>
    </location>
    <ligand>
        <name>Mg(2+)</name>
        <dbReference type="ChEBI" id="CHEBI:18420"/>
        <label>1</label>
    </ligand>
</feature>
<feature type="binding site" evidence="1">
    <location>
        <position position="792"/>
    </location>
    <ligand>
        <name>Mg(2+)</name>
        <dbReference type="ChEBI" id="CHEBI:18420"/>
        <label>1</label>
    </ligand>
</feature>
<feature type="binding site" evidence="1">
    <location>
        <position position="794"/>
    </location>
    <ligand>
        <name>Mg(2+)</name>
        <dbReference type="ChEBI" id="CHEBI:18420"/>
        <label>1</label>
    </ligand>
</feature>
<feature type="binding site" evidence="1">
    <location>
        <position position="813"/>
    </location>
    <ligand>
        <name>Mg(2+)</name>
        <dbReference type="ChEBI" id="CHEBI:18420"/>
        <label>2</label>
    </ligand>
</feature>
<feature type="binding site" evidence="1">
    <location>
        <position position="815"/>
    </location>
    <ligand>
        <name>Mg(2+)</name>
        <dbReference type="ChEBI" id="CHEBI:18420"/>
        <label>2</label>
    </ligand>
</feature>
<feature type="binding site" evidence="1">
    <location>
        <position position="864"/>
    </location>
    <ligand>
        <name>Mg(2+)</name>
        <dbReference type="ChEBI" id="CHEBI:18420"/>
        <label>2</label>
    </ligand>
</feature>
<feature type="modified residue" description="Phosphoserine" evidence="7">
    <location>
        <position position="118"/>
    </location>
</feature>
<feature type="modified residue" description="Phosphoserine" evidence="7">
    <location>
        <position position="367"/>
    </location>
</feature>
<feature type="modified residue" description="Phosphoserine" evidence="6">
    <location>
        <position position="583"/>
    </location>
</feature>
<feature type="sequence conflict" description="In Ref. 5; AAT92876." evidence="5" ref="5">
    <original>F</original>
    <variation>L</variation>
    <location>
        <position position="782"/>
    </location>
</feature>
<feature type="helix" evidence="9">
    <location>
        <begin position="6"/>
        <end position="10"/>
    </location>
</feature>
<feature type="helix" evidence="9">
    <location>
        <begin position="11"/>
        <end position="13"/>
    </location>
</feature>
<feature type="strand" evidence="9">
    <location>
        <begin position="15"/>
        <end position="18"/>
    </location>
</feature>
<feature type="helix" evidence="9">
    <location>
        <begin position="19"/>
        <end position="22"/>
    </location>
</feature>
<feature type="strand" evidence="9">
    <location>
        <begin position="26"/>
        <end position="30"/>
    </location>
</feature>
<feature type="helix" evidence="9">
    <location>
        <begin position="34"/>
        <end position="41"/>
    </location>
</feature>
<feature type="strand" evidence="10">
    <location>
        <begin position="45"/>
        <end position="49"/>
    </location>
</feature>
<feature type="helix" evidence="9">
    <location>
        <begin position="53"/>
        <end position="67"/>
    </location>
</feature>
<feature type="strand" evidence="9">
    <location>
        <begin position="71"/>
        <end position="76"/>
    </location>
</feature>
<feature type="helix" evidence="9">
    <location>
        <begin position="82"/>
        <end position="96"/>
    </location>
</feature>
<feature type="strand" evidence="8">
    <location>
        <begin position="667"/>
        <end position="669"/>
    </location>
</feature>
<feature type="helix" evidence="9">
    <location>
        <begin position="769"/>
        <end position="781"/>
    </location>
</feature>
<feature type="strand" evidence="9">
    <location>
        <begin position="786"/>
        <end position="788"/>
    </location>
</feature>
<feature type="helix" evidence="9">
    <location>
        <begin position="793"/>
        <end position="802"/>
    </location>
</feature>
<feature type="strand" evidence="9">
    <location>
        <begin position="807"/>
        <end position="810"/>
    </location>
</feature>
<feature type="helix" evidence="9">
    <location>
        <begin position="815"/>
        <end position="818"/>
    </location>
</feature>
<feature type="strand" evidence="9">
    <location>
        <begin position="823"/>
        <end position="827"/>
    </location>
</feature>
<feature type="strand" evidence="9">
    <location>
        <begin position="830"/>
        <end position="839"/>
    </location>
</feature>
<feature type="helix" evidence="9">
    <location>
        <begin position="840"/>
        <end position="847"/>
    </location>
</feature>
<feature type="helix" evidence="9">
    <location>
        <begin position="851"/>
        <end position="861"/>
    </location>
</feature>
<feature type="helix" evidence="9">
    <location>
        <begin position="874"/>
        <end position="884"/>
    </location>
</feature>
<feature type="helix" evidence="9">
    <location>
        <begin position="887"/>
        <end position="899"/>
    </location>
</feature>
<feature type="helix" evidence="9">
    <location>
        <begin position="901"/>
        <end position="904"/>
    </location>
</feature>
<feature type="helix" evidence="9">
    <location>
        <begin position="909"/>
        <end position="920"/>
    </location>
</feature>
<feature type="helix" evidence="9">
    <location>
        <begin position="932"/>
        <end position="939"/>
    </location>
</feature>
<feature type="helix" evidence="9">
    <location>
        <begin position="957"/>
        <end position="968"/>
    </location>
</feature>
<feature type="helix" evidence="9">
    <location>
        <begin position="972"/>
        <end position="982"/>
    </location>
</feature>
<sequence length="1031" mass="117838">MGVHSFWDIAGPTARPVRLESLEDKRMAVDASIWIYQFLKAVRDQEGNAVKNSHITGFFRRICKLLYFGIRPVFVFDGGVPVLKRETIRQRKERRQGKRESAKSTARKLLALQLQNGSNDNVKNSTPSSGSSVQIFKPQDEWDLPDIPGFKYDKEDARVNSNKTFEKLMNSINGDGLEDIDLDTINPASAEFEELPKATQYLILSSLRLKSRLRMGYSKEQLETIFPNSMDFSRFQIDMVKRRNFFTQKLINTTGFQDGGASKLNEEVINRISGQKSKEYKLTKTNNGWILGLGANDGSDAQKAIVIDDKDAGALVKQLDSNAEDGDVLRWDDLEDNSLKIVRHESSNATTAPQKRSNRSEDEGCDSDECEWEEVELKPKNVKFVEDFSLKAARLPYMGQSLNNAGSKSFLDKRHDQASPSKTTPTMRISRISVEDDDEDYLKQIEEIEMMEAVQLSKMEKKPEADDKSKIAKPVTSKGTEARPPIVQYGLLGAQPDSKQPYHVTNLNSKSESVIKRTSKTVLSEFRPPSQQEDKGAILTEGEQNLNFISHKIPQFDFNNENSLLFQKNTESNVSQEATKEKSPIPEMPSWFSSTASQQLYNPYNTTNFVEDKNVRNEQESGAETTNKGSSYELLTGLNATEILERESEKESSNDENKDDDLEVLSEELFEDVPTKSQISKEAEDNDSRKVESINKEHRKPLIFDYDFSEDEEDNIVENMIKEQEEFDTFKNTTLSTSAERNVAENAFVEDELFEQQMKDKRDSDEVTMDMIKEVQELLSRFGIPYITAPMEAEAQCAELLQLNLVDGIITDDSDVFLFGGTKIYKNMFHEKNYVEFYDAESILKLLGLDRKNMIELAQLLGSDYTNGLKGMGPVSSIEVIAEFGNLKNFKDWYNNGQFDKRKQETENKFEKDLRKKLVNNEIILDDDFPSVMVYDAYMRPEVDHDTTPFVWGVPDLDMLRSFMKTQLGWPHEKSDEILIPLIRDVNKRKKKGKQKRINEFFPREYISGDKKLNTSKRISTATGKLKKRKM</sequence>
<gene>
    <name type="primary">RAD2</name>
    <name type="ordered locus">YGR258C</name>
</gene>
<dbReference type="EC" id="3.1.-.-"/>
<dbReference type="EMBL" id="M10275">
    <property type="protein sequence ID" value="AAA66928.1"/>
    <property type="molecule type" value="Genomic_DNA"/>
</dbReference>
<dbReference type="EMBL" id="Y07777">
    <property type="protein sequence ID" value="CAA69080.1"/>
    <property type="molecule type" value="Genomic_DNA"/>
</dbReference>
<dbReference type="EMBL" id="Z73043">
    <property type="protein sequence ID" value="CAA97287.1"/>
    <property type="molecule type" value="Genomic_DNA"/>
</dbReference>
<dbReference type="EMBL" id="BK006941">
    <property type="protein sequence ID" value="DAA08349.1"/>
    <property type="molecule type" value="Genomic_DNA"/>
</dbReference>
<dbReference type="EMBL" id="AY692857">
    <property type="protein sequence ID" value="AAT92876.1"/>
    <property type="molecule type" value="Genomic_DNA"/>
</dbReference>
<dbReference type="PIR" id="A29839">
    <property type="entry name" value="A29839"/>
</dbReference>
<dbReference type="RefSeq" id="NP_011774.1">
    <property type="nucleotide sequence ID" value="NM_001181387.1"/>
</dbReference>
<dbReference type="PDB" id="2LOX">
    <property type="method" value="NMR"/>
    <property type="chains" value="B=642-690"/>
</dbReference>
<dbReference type="PDB" id="4Q0R">
    <property type="method" value="X-ray"/>
    <property type="resolution" value="2.75 A"/>
    <property type="chains" value="A/B=1-111, A/B=732-986"/>
</dbReference>
<dbReference type="PDB" id="4Q0W">
    <property type="method" value="X-ray"/>
    <property type="resolution" value="2.10 A"/>
    <property type="chains" value="A/B=2-111, A/B=732-986"/>
</dbReference>
<dbReference type="PDB" id="4Q0Z">
    <property type="method" value="X-ray"/>
    <property type="resolution" value="2.40 A"/>
    <property type="chains" value="A/B/E/F=2-111, A/B/E/F=732-986"/>
</dbReference>
<dbReference type="PDB" id="4Q10">
    <property type="method" value="X-ray"/>
    <property type="resolution" value="2.70 A"/>
    <property type="chains" value="A/B=2-111, A/B=732-986"/>
</dbReference>
<dbReference type="PDBsum" id="2LOX"/>
<dbReference type="PDBsum" id="4Q0R"/>
<dbReference type="PDBsum" id="4Q0W"/>
<dbReference type="PDBsum" id="4Q0Z"/>
<dbReference type="PDBsum" id="4Q10"/>
<dbReference type="SMR" id="P07276"/>
<dbReference type="BioGRID" id="33510">
    <property type="interactions" value="77"/>
</dbReference>
<dbReference type="DIP" id="DIP-5869N"/>
<dbReference type="ELM" id="P07276"/>
<dbReference type="FunCoup" id="P07276">
    <property type="interactions" value="622"/>
</dbReference>
<dbReference type="IntAct" id="P07276">
    <property type="interactions" value="7"/>
</dbReference>
<dbReference type="STRING" id="4932.YGR258C"/>
<dbReference type="iPTMnet" id="P07276"/>
<dbReference type="PaxDb" id="4932-YGR258C"/>
<dbReference type="PeptideAtlas" id="P07276"/>
<dbReference type="EnsemblFungi" id="YGR258C_mRNA">
    <property type="protein sequence ID" value="YGR258C"/>
    <property type="gene ID" value="YGR258C"/>
</dbReference>
<dbReference type="GeneID" id="853174"/>
<dbReference type="KEGG" id="sce:YGR258C"/>
<dbReference type="AGR" id="SGD:S000003490"/>
<dbReference type="SGD" id="S000003490">
    <property type="gene designation" value="RAD2"/>
</dbReference>
<dbReference type="VEuPathDB" id="FungiDB:YGR258C"/>
<dbReference type="eggNOG" id="KOG2520">
    <property type="taxonomic scope" value="Eukaryota"/>
</dbReference>
<dbReference type="GeneTree" id="ENSGT00940000163631"/>
<dbReference type="HOGENOM" id="CLU_003018_2_0_1"/>
<dbReference type="InParanoid" id="P07276"/>
<dbReference type="OMA" id="PNSMDFS"/>
<dbReference type="OrthoDB" id="31113at2759"/>
<dbReference type="BioCyc" id="YEAST:G3O-30928-MONOMER"/>
<dbReference type="Reactome" id="R-SCE-6782135">
    <property type="pathway name" value="Dual incision in TC-NER"/>
</dbReference>
<dbReference type="BioGRID-ORCS" id="853174">
    <property type="hits" value="0 hits in 10 CRISPR screens"/>
</dbReference>
<dbReference type="EvolutionaryTrace" id="P07276"/>
<dbReference type="PRO" id="PR:P07276"/>
<dbReference type="Proteomes" id="UP000002311">
    <property type="component" value="Chromosome VII"/>
</dbReference>
<dbReference type="RNAct" id="P07276">
    <property type="molecule type" value="protein"/>
</dbReference>
<dbReference type="GO" id="GO:0000112">
    <property type="term" value="C:nucleotide-excision repair factor 3 complex"/>
    <property type="evidence" value="ECO:0000314"/>
    <property type="project" value="SGD"/>
</dbReference>
<dbReference type="GO" id="GO:0005634">
    <property type="term" value="C:nucleus"/>
    <property type="evidence" value="ECO:0000318"/>
    <property type="project" value="GO_Central"/>
</dbReference>
<dbReference type="GO" id="GO:0004520">
    <property type="term" value="F:DNA endonuclease activity"/>
    <property type="evidence" value="ECO:0000318"/>
    <property type="project" value="GO_Central"/>
</dbReference>
<dbReference type="GO" id="GO:0046872">
    <property type="term" value="F:metal ion binding"/>
    <property type="evidence" value="ECO:0007669"/>
    <property type="project" value="UniProtKB-KW"/>
</dbReference>
<dbReference type="GO" id="GO:0003697">
    <property type="term" value="F:single-stranded DNA binding"/>
    <property type="evidence" value="ECO:0000318"/>
    <property type="project" value="GO_Central"/>
</dbReference>
<dbReference type="GO" id="GO:0000014">
    <property type="term" value="F:single-stranded DNA endodeoxyribonuclease activity"/>
    <property type="evidence" value="ECO:0000314"/>
    <property type="project" value="SGD"/>
</dbReference>
<dbReference type="GO" id="GO:0006289">
    <property type="term" value="P:nucleotide-excision repair"/>
    <property type="evidence" value="ECO:0000314"/>
    <property type="project" value="SGD"/>
</dbReference>
<dbReference type="GO" id="GO:0006366">
    <property type="term" value="P:transcription by RNA polymerase II"/>
    <property type="evidence" value="ECO:0000316"/>
    <property type="project" value="SGD"/>
</dbReference>
<dbReference type="CDD" id="cd09904">
    <property type="entry name" value="H3TH_XPG"/>
    <property type="match status" value="1"/>
</dbReference>
<dbReference type="CDD" id="cd09868">
    <property type="entry name" value="PIN_XPG_RAD2"/>
    <property type="match status" value="2"/>
</dbReference>
<dbReference type="DisProt" id="DP01631"/>
<dbReference type="FunFam" id="3.40.50.1010:FF:000025">
    <property type="entry name" value="DNA repair protein RAD2"/>
    <property type="match status" value="1"/>
</dbReference>
<dbReference type="FunFam" id="1.10.150.20:FF:000057">
    <property type="entry name" value="RAD2p Single-stranded DNA endonuclease"/>
    <property type="match status" value="1"/>
</dbReference>
<dbReference type="FunFam" id="3.40.50.1010:FF:000046">
    <property type="entry name" value="RAD2p Single-stranded DNA endonuclease"/>
    <property type="match status" value="1"/>
</dbReference>
<dbReference type="Gene3D" id="1.10.150.20">
    <property type="entry name" value="5' to 3' exonuclease, C-terminal subdomain"/>
    <property type="match status" value="1"/>
</dbReference>
<dbReference type="Gene3D" id="3.40.50.1010">
    <property type="entry name" value="5'-nuclease"/>
    <property type="match status" value="2"/>
</dbReference>
<dbReference type="IDEAL" id="IID50166"/>
<dbReference type="InterPro" id="IPR036279">
    <property type="entry name" value="5-3_exonuclease_C_sf"/>
</dbReference>
<dbReference type="InterPro" id="IPR008918">
    <property type="entry name" value="HhH2"/>
</dbReference>
<dbReference type="InterPro" id="IPR029060">
    <property type="entry name" value="PIN-like_dom_sf"/>
</dbReference>
<dbReference type="InterPro" id="IPR006086">
    <property type="entry name" value="XPG-I_dom"/>
</dbReference>
<dbReference type="InterPro" id="IPR006084">
    <property type="entry name" value="XPG/Rad2"/>
</dbReference>
<dbReference type="InterPro" id="IPR001044">
    <property type="entry name" value="XPG/Rad2_eukaryotes"/>
</dbReference>
<dbReference type="InterPro" id="IPR019974">
    <property type="entry name" value="XPG_CS"/>
</dbReference>
<dbReference type="InterPro" id="IPR006085">
    <property type="entry name" value="XPG_DNA_repair_N"/>
</dbReference>
<dbReference type="NCBIfam" id="TIGR00600">
    <property type="entry name" value="rad2"/>
    <property type="match status" value="1"/>
</dbReference>
<dbReference type="PANTHER" id="PTHR16171">
    <property type="entry name" value="DNA REPAIR PROTEIN COMPLEMENTING XP-G CELLS-RELATED"/>
    <property type="match status" value="1"/>
</dbReference>
<dbReference type="PANTHER" id="PTHR16171:SF7">
    <property type="entry name" value="DNA REPAIR PROTEIN RAD2"/>
    <property type="match status" value="1"/>
</dbReference>
<dbReference type="Pfam" id="PF00867">
    <property type="entry name" value="XPG_I"/>
    <property type="match status" value="1"/>
</dbReference>
<dbReference type="Pfam" id="PF00752">
    <property type="entry name" value="XPG_N"/>
    <property type="match status" value="1"/>
</dbReference>
<dbReference type="PRINTS" id="PR00853">
    <property type="entry name" value="XPGRADSUPER"/>
</dbReference>
<dbReference type="PRINTS" id="PR00066">
    <property type="entry name" value="XRODRMPGMNTG"/>
</dbReference>
<dbReference type="SMART" id="SM00279">
    <property type="entry name" value="HhH2"/>
    <property type="match status" value="1"/>
</dbReference>
<dbReference type="SMART" id="SM00484">
    <property type="entry name" value="XPGI"/>
    <property type="match status" value="1"/>
</dbReference>
<dbReference type="SMART" id="SM00485">
    <property type="entry name" value="XPGN"/>
    <property type="match status" value="1"/>
</dbReference>
<dbReference type="SUPFAM" id="SSF47807">
    <property type="entry name" value="5' to 3' exonuclease, C-terminal subdomain"/>
    <property type="match status" value="1"/>
</dbReference>
<dbReference type="SUPFAM" id="SSF88723">
    <property type="entry name" value="PIN domain-like"/>
    <property type="match status" value="1"/>
</dbReference>
<dbReference type="PROSITE" id="PS00841">
    <property type="entry name" value="XPG_1"/>
    <property type="match status" value="1"/>
</dbReference>
<dbReference type="PROSITE" id="PS00842">
    <property type="entry name" value="XPG_2"/>
    <property type="match status" value="1"/>
</dbReference>
<keyword id="KW-0002">3D-structure</keyword>
<keyword id="KW-0227">DNA damage</keyword>
<keyword id="KW-0234">DNA repair</keyword>
<keyword id="KW-0255">Endonuclease</keyword>
<keyword id="KW-0378">Hydrolase</keyword>
<keyword id="KW-0460">Magnesium</keyword>
<keyword id="KW-0479">Metal-binding</keyword>
<keyword id="KW-0540">Nuclease</keyword>
<keyword id="KW-0539">Nucleus</keyword>
<keyword id="KW-0597">Phosphoprotein</keyword>
<keyword id="KW-1185">Reference proteome</keyword>
<reference key="1">
    <citation type="journal article" date="1985" name="Gene">
        <title>The RAD2 gene of Saccharomyces cerevisiae: nucleotide sequence and transcript mapping.</title>
        <authorList>
            <person name="Nicolet C.M."/>
            <person name="Chenevert J.M."/>
            <person name="Friedberg E.C."/>
        </authorList>
    </citation>
    <scope>NUCLEOTIDE SEQUENCE [GENOMIC DNA]</scope>
</reference>
<reference key="2">
    <citation type="journal article" date="1986" name="J. Bacteriol.">
        <title>Nucleotide sequence, transcript mapping, and regulation of the RAD2 gene of Saccharomyces cerevisiae.</title>
        <authorList>
            <person name="Madura K."/>
            <person name="Prakash S."/>
        </authorList>
    </citation>
    <scope>NUCLEOTIDE SEQUENCE [GENOMIC DNA]</scope>
    <scope>SEQUENCE REVISION</scope>
</reference>
<reference key="3">
    <citation type="journal article" date="1997" name="Nature">
        <title>The nucleotide sequence of Saccharomyces cerevisiae chromosome VII.</title>
        <authorList>
            <person name="Tettelin H."/>
            <person name="Agostoni-Carbone M.L."/>
            <person name="Albermann K."/>
            <person name="Albers M."/>
            <person name="Arroyo J."/>
            <person name="Backes U."/>
            <person name="Barreiros T."/>
            <person name="Bertani I."/>
            <person name="Bjourson A.J."/>
            <person name="Brueckner M."/>
            <person name="Bruschi C.V."/>
            <person name="Carignani G."/>
            <person name="Castagnoli L."/>
            <person name="Cerdan E."/>
            <person name="Clemente M.L."/>
            <person name="Coblenz A."/>
            <person name="Coglievina M."/>
            <person name="Coissac E."/>
            <person name="Defoor E."/>
            <person name="Del Bino S."/>
            <person name="Delius H."/>
            <person name="Delneri D."/>
            <person name="de Wergifosse P."/>
            <person name="Dujon B."/>
            <person name="Durand P."/>
            <person name="Entian K.-D."/>
            <person name="Eraso P."/>
            <person name="Escribano V."/>
            <person name="Fabiani L."/>
            <person name="Fartmann B."/>
            <person name="Feroli F."/>
            <person name="Feuermann M."/>
            <person name="Frontali L."/>
            <person name="Garcia-Gonzalez M."/>
            <person name="Garcia-Saez M.I."/>
            <person name="Goffeau A."/>
            <person name="Guerreiro P."/>
            <person name="Hani J."/>
            <person name="Hansen M."/>
            <person name="Hebling U."/>
            <person name="Hernandez K."/>
            <person name="Heumann K."/>
            <person name="Hilger F."/>
            <person name="Hofmann B."/>
            <person name="Indge K.J."/>
            <person name="James C.M."/>
            <person name="Klima R."/>
            <person name="Koetter P."/>
            <person name="Kramer B."/>
            <person name="Kramer W."/>
            <person name="Lauquin G."/>
            <person name="Leuther H."/>
            <person name="Louis E.J."/>
            <person name="Maillier E."/>
            <person name="Marconi A."/>
            <person name="Martegani E."/>
            <person name="Mazon M.J."/>
            <person name="Mazzoni C."/>
            <person name="McReynolds A.D.K."/>
            <person name="Melchioretto P."/>
            <person name="Mewes H.-W."/>
            <person name="Minenkova O."/>
            <person name="Mueller-Auer S."/>
            <person name="Nawrocki A."/>
            <person name="Netter P."/>
            <person name="Neu R."/>
            <person name="Nombela C."/>
            <person name="Oliver S.G."/>
            <person name="Panzeri L."/>
            <person name="Paoluzi S."/>
            <person name="Plevani P."/>
            <person name="Portetelle D."/>
            <person name="Portillo F."/>
            <person name="Potier S."/>
            <person name="Purnelle B."/>
            <person name="Rieger M."/>
            <person name="Riles L."/>
            <person name="Rinaldi T."/>
            <person name="Robben J."/>
            <person name="Rodrigues-Pousada C."/>
            <person name="Rodriguez-Belmonte E."/>
            <person name="Rodriguez-Torres A.M."/>
            <person name="Rose M."/>
            <person name="Ruzzi M."/>
            <person name="Saliola M."/>
            <person name="Sanchez-Perez M."/>
            <person name="Schaefer B."/>
            <person name="Schaefer M."/>
            <person name="Scharfe M."/>
            <person name="Schmidheini T."/>
            <person name="Schreer A."/>
            <person name="Skala J."/>
            <person name="Souciet J.-L."/>
            <person name="Steensma H.Y."/>
            <person name="Talla E."/>
            <person name="Thierry A."/>
            <person name="Vandenbol M."/>
            <person name="van der Aart Q.J.M."/>
            <person name="Van Dyck L."/>
            <person name="Vanoni M."/>
            <person name="Verhasselt P."/>
            <person name="Voet M."/>
            <person name="Volckaert G."/>
            <person name="Wambutt R."/>
            <person name="Watson M.D."/>
            <person name="Weber N."/>
            <person name="Wedler E."/>
            <person name="Wedler H."/>
            <person name="Wipfli P."/>
            <person name="Wolf K."/>
            <person name="Wright L.F."/>
            <person name="Zaccaria P."/>
            <person name="Zimmermann M."/>
            <person name="Zollner A."/>
            <person name="Kleine K."/>
        </authorList>
    </citation>
    <scope>NUCLEOTIDE SEQUENCE [LARGE SCALE GENOMIC DNA]</scope>
    <source>
        <strain>ATCC 204508 / S288c</strain>
    </source>
</reference>
<reference key="4">
    <citation type="journal article" date="2014" name="G3 (Bethesda)">
        <title>The reference genome sequence of Saccharomyces cerevisiae: Then and now.</title>
        <authorList>
            <person name="Engel S.R."/>
            <person name="Dietrich F.S."/>
            <person name="Fisk D.G."/>
            <person name="Binkley G."/>
            <person name="Balakrishnan R."/>
            <person name="Costanzo M.C."/>
            <person name="Dwight S.S."/>
            <person name="Hitz B.C."/>
            <person name="Karra K."/>
            <person name="Nash R.S."/>
            <person name="Weng S."/>
            <person name="Wong E.D."/>
            <person name="Lloyd P."/>
            <person name="Skrzypek M.S."/>
            <person name="Miyasato S.R."/>
            <person name="Simison M."/>
            <person name="Cherry J.M."/>
        </authorList>
    </citation>
    <scope>GENOME REANNOTATION</scope>
    <source>
        <strain>ATCC 204508 / S288c</strain>
    </source>
</reference>
<reference key="5">
    <citation type="journal article" date="2007" name="Genome Res.">
        <title>Approaching a complete repository of sequence-verified protein-encoding clones for Saccharomyces cerevisiae.</title>
        <authorList>
            <person name="Hu Y."/>
            <person name="Rolfs A."/>
            <person name="Bhullar B."/>
            <person name="Murthy T.V.S."/>
            <person name="Zhu C."/>
            <person name="Berger M.F."/>
            <person name="Camargo A.A."/>
            <person name="Kelley F."/>
            <person name="McCarron S."/>
            <person name="Jepson D."/>
            <person name="Richardson A."/>
            <person name="Raphael J."/>
            <person name="Moreira D."/>
            <person name="Taycher E."/>
            <person name="Zuo D."/>
            <person name="Mohr S."/>
            <person name="Kane M.F."/>
            <person name="Williamson J."/>
            <person name="Simpson A.J.G."/>
            <person name="Bulyk M.L."/>
            <person name="Harlow E."/>
            <person name="Marsischky G."/>
            <person name="Kolodner R.D."/>
            <person name="LaBaer J."/>
        </authorList>
    </citation>
    <scope>NUCLEOTIDE SEQUENCE [GENOMIC DNA]</scope>
    <source>
        <strain>ATCC 204508 / S288c</strain>
    </source>
</reference>
<reference key="6">
    <citation type="journal article" date="1997" name="Yeast">
        <title>Analysis of an 11.6 kb region from the right arm of chromosome VII of Saccharomyces cerevisiae between the RAD2 and the MES1 genes reveals the presence of three new genes.</title>
        <authorList>
            <person name="Clemente M.L."/>
            <person name="Sartori G."/>
            <person name="Cardazzo B."/>
            <person name="Carignani G."/>
        </authorList>
    </citation>
    <scope>NUCLEOTIDE SEQUENCE [GENOMIC DNA] OF 1-51</scope>
    <source>
        <strain>ATCC 96604 / S288c / FY1679</strain>
    </source>
</reference>
<reference key="7">
    <citation type="journal article" date="1993" name="Nature">
        <title>Yeast excision repair gene RAD2 encodes a single-stranded DNA endonuclease.</title>
        <authorList>
            <person name="Habraken Y."/>
            <person name="Sung P."/>
            <person name="Prakash L."/>
            <person name="Prakash S."/>
        </authorList>
    </citation>
    <scope>FUNCTION</scope>
</reference>
<reference key="8">
    <citation type="journal article" date="2003" name="Nature">
        <title>Global analysis of protein expression in yeast.</title>
        <authorList>
            <person name="Ghaemmaghami S."/>
            <person name="Huh W.-K."/>
            <person name="Bower K."/>
            <person name="Howson R.W."/>
            <person name="Belle A."/>
            <person name="Dephoure N."/>
            <person name="O'Shea E.K."/>
            <person name="Weissman J.S."/>
        </authorList>
    </citation>
    <scope>LEVEL OF PROTEIN EXPRESSION [LARGE SCALE ANALYSIS]</scope>
</reference>
<reference key="9">
    <citation type="journal article" date="2008" name="Mol. Cell. Proteomics">
        <title>A multidimensional chromatography technology for in-depth phosphoproteome analysis.</title>
        <authorList>
            <person name="Albuquerque C.P."/>
            <person name="Smolka M.B."/>
            <person name="Payne S.H."/>
            <person name="Bafna V."/>
            <person name="Eng J."/>
            <person name="Zhou H."/>
        </authorList>
    </citation>
    <scope>PHOSPHORYLATION [LARGE SCALE ANALYSIS] AT SER-583</scope>
    <scope>IDENTIFICATION BY MASS SPECTROMETRY [LARGE SCALE ANALYSIS]</scope>
</reference>
<reference key="10">
    <citation type="journal article" date="2009" name="Science">
        <title>Global analysis of Cdk1 substrate phosphorylation sites provides insights into evolution.</title>
        <authorList>
            <person name="Holt L.J."/>
            <person name="Tuch B.B."/>
            <person name="Villen J."/>
            <person name="Johnson A.D."/>
            <person name="Gygi S.P."/>
            <person name="Morgan D.O."/>
        </authorList>
    </citation>
    <scope>PHOSPHORYLATION [LARGE SCALE ANALYSIS] AT SER-118 AND SER-367</scope>
    <scope>IDENTIFICATION BY MASS SPECTROMETRY [LARGE SCALE ANALYSIS]</scope>
</reference>
<accession>P07276</accession>
<accession>D6VV38</accession>
<accession>E9P8X9</accession>
<protein>
    <recommendedName>
        <fullName>DNA repair protein RAD2</fullName>
        <ecNumber>3.1.-.-</ecNumber>
    </recommendedName>
</protein>
<proteinExistence type="evidence at protein level"/>
<evidence type="ECO:0000250" key="1"/>
<evidence type="ECO:0000256" key="2">
    <source>
        <dbReference type="SAM" id="MobiDB-lite"/>
    </source>
</evidence>
<evidence type="ECO:0000269" key="3">
    <source>
    </source>
</evidence>
<evidence type="ECO:0000269" key="4">
    <source>
    </source>
</evidence>
<evidence type="ECO:0000305" key="5"/>
<evidence type="ECO:0007744" key="6">
    <source>
    </source>
</evidence>
<evidence type="ECO:0007744" key="7">
    <source>
    </source>
</evidence>
<evidence type="ECO:0007829" key="8">
    <source>
        <dbReference type="PDB" id="2LOX"/>
    </source>
</evidence>
<evidence type="ECO:0007829" key="9">
    <source>
        <dbReference type="PDB" id="4Q0W"/>
    </source>
</evidence>
<evidence type="ECO:0007829" key="10">
    <source>
        <dbReference type="PDB" id="4Q0Z"/>
    </source>
</evidence>
<organism>
    <name type="scientific">Saccharomyces cerevisiae (strain ATCC 204508 / S288c)</name>
    <name type="common">Baker's yeast</name>
    <dbReference type="NCBI Taxonomy" id="559292"/>
    <lineage>
        <taxon>Eukaryota</taxon>
        <taxon>Fungi</taxon>
        <taxon>Dikarya</taxon>
        <taxon>Ascomycota</taxon>
        <taxon>Saccharomycotina</taxon>
        <taxon>Saccharomycetes</taxon>
        <taxon>Saccharomycetales</taxon>
        <taxon>Saccharomycetaceae</taxon>
        <taxon>Saccharomyces</taxon>
    </lineage>
</organism>
<comment type="function">
    <text evidence="4">Single-stranded DNA endonuclease involved in excision repair of DNA damaged with UV light, bulky adducts, or cross-linking agents. Essential for the incision step of excision-repair.</text>
</comment>
<comment type="cofactor">
    <cofactor evidence="1">
        <name>Mg(2+)</name>
        <dbReference type="ChEBI" id="CHEBI:18420"/>
    </cofactor>
    <text evidence="1">Binds 2 magnesium ions per subunit. They probably participate in the reaction catalyzed by the enzyme. May bind an additional third magnesium ion after substrate binding.</text>
</comment>
<comment type="interaction">
    <interactant intactId="EBI-14757">
        <id>P07276</id>
    </interactant>
    <interactant intactId="EBI-8586">
        <id>P19882</id>
        <label>HSP60</label>
    </interactant>
    <organismsDiffer>false</organismsDiffer>
    <experiments>2</experiments>
</comment>
<comment type="interaction">
    <interactant intactId="EBI-14757">
        <id>P07276</id>
    </interactant>
    <interactant intactId="EBI-16945">
        <id>Q00416</id>
        <label>SEN1</label>
    </interactant>
    <organismsDiffer>false</organismsDiffer>
    <experiments>3</experiments>
</comment>
<comment type="subcellular location">
    <subcellularLocation>
        <location>Nucleus</location>
    </subcellularLocation>
</comment>
<comment type="miscellaneous">
    <text evidence="3">Present with 846 molecules/cell in log phase SD medium.</text>
</comment>
<comment type="similarity">
    <text evidence="5">Belongs to the XPG/RAD2 endonuclease family. XPG subfamily.</text>
</comment>